<proteinExistence type="inferred from homology"/>
<reference key="1">
    <citation type="submission" date="1999-04" db="EMBL/GenBank/DDBJ databases">
        <title>Evolutionary analysis of plastidic maturase K and nuclear chalcone synthase and their utility for phylogenetic reconstructions within the Brassicaceae.</title>
        <authorList>
            <person name="Koch M."/>
            <person name="Mitchell-Olds T."/>
        </authorList>
    </citation>
    <scope>NUCLEOTIDE SEQUENCE [GENOMIC DNA]</scope>
</reference>
<organism>
    <name type="scientific">Alliaria petiolata</name>
    <name type="common">Garlic mustard</name>
    <name type="synonym">Arabis petiolata</name>
    <dbReference type="NCBI Taxonomy" id="126270"/>
    <lineage>
        <taxon>Eukaryota</taxon>
        <taxon>Viridiplantae</taxon>
        <taxon>Streptophyta</taxon>
        <taxon>Embryophyta</taxon>
        <taxon>Tracheophyta</taxon>
        <taxon>Spermatophyta</taxon>
        <taxon>Magnoliopsida</taxon>
        <taxon>eudicotyledons</taxon>
        <taxon>Gunneridae</taxon>
        <taxon>Pentapetalae</taxon>
        <taxon>rosids</taxon>
        <taxon>malvids</taxon>
        <taxon>Brassicales</taxon>
        <taxon>Brassicaceae</taxon>
        <taxon>Thlaspideae</taxon>
        <taxon>Alliaria</taxon>
    </lineage>
</organism>
<protein>
    <recommendedName>
        <fullName evidence="1">Maturase K</fullName>
    </recommendedName>
    <alternativeName>
        <fullName evidence="1">Intron maturase</fullName>
    </alternativeName>
</protein>
<comment type="function">
    <text evidence="1">Usually encoded in the trnK tRNA gene intron. Probably assists in splicing its own and other chloroplast group II introns.</text>
</comment>
<comment type="subcellular location">
    <subcellularLocation>
        <location>Plastid</location>
        <location>Chloroplast</location>
    </subcellularLocation>
</comment>
<comment type="similarity">
    <text evidence="1">Belongs to the intron maturase 2 family. MatK subfamily.</text>
</comment>
<evidence type="ECO:0000255" key="1">
    <source>
        <dbReference type="HAMAP-Rule" id="MF_01390"/>
    </source>
</evidence>
<accession>Q9GF32</accession>
<name>MATK_ALLPE</name>
<geneLocation type="chloroplast"/>
<gene>
    <name evidence="1" type="primary">matK</name>
</gene>
<dbReference type="EMBL" id="AF144363">
    <property type="protein sequence ID" value="AAG43332.1"/>
    <property type="molecule type" value="Genomic_DNA"/>
</dbReference>
<dbReference type="GO" id="GO:0009507">
    <property type="term" value="C:chloroplast"/>
    <property type="evidence" value="ECO:0007669"/>
    <property type="project" value="UniProtKB-SubCell"/>
</dbReference>
<dbReference type="GO" id="GO:0003723">
    <property type="term" value="F:RNA binding"/>
    <property type="evidence" value="ECO:0007669"/>
    <property type="project" value="UniProtKB-KW"/>
</dbReference>
<dbReference type="GO" id="GO:0006397">
    <property type="term" value="P:mRNA processing"/>
    <property type="evidence" value="ECO:0007669"/>
    <property type="project" value="UniProtKB-KW"/>
</dbReference>
<dbReference type="GO" id="GO:0008380">
    <property type="term" value="P:RNA splicing"/>
    <property type="evidence" value="ECO:0007669"/>
    <property type="project" value="UniProtKB-UniRule"/>
</dbReference>
<dbReference type="GO" id="GO:0008033">
    <property type="term" value="P:tRNA processing"/>
    <property type="evidence" value="ECO:0007669"/>
    <property type="project" value="UniProtKB-KW"/>
</dbReference>
<dbReference type="HAMAP" id="MF_01390">
    <property type="entry name" value="MatK"/>
    <property type="match status" value="1"/>
</dbReference>
<dbReference type="InterPro" id="IPR024937">
    <property type="entry name" value="Domain_X"/>
</dbReference>
<dbReference type="InterPro" id="IPR002866">
    <property type="entry name" value="Maturase_MatK"/>
</dbReference>
<dbReference type="InterPro" id="IPR024942">
    <property type="entry name" value="Maturase_MatK_N"/>
</dbReference>
<dbReference type="PANTHER" id="PTHR34811">
    <property type="entry name" value="MATURASE K"/>
    <property type="match status" value="1"/>
</dbReference>
<dbReference type="PANTHER" id="PTHR34811:SF1">
    <property type="entry name" value="MATURASE K"/>
    <property type="match status" value="1"/>
</dbReference>
<dbReference type="Pfam" id="PF01348">
    <property type="entry name" value="Intron_maturas2"/>
    <property type="match status" value="1"/>
</dbReference>
<dbReference type="Pfam" id="PF01824">
    <property type="entry name" value="MatK_N"/>
    <property type="match status" value="1"/>
</dbReference>
<feature type="chain" id="PRO_0000143221" description="Maturase K">
    <location>
        <begin position="1"/>
        <end position="504"/>
    </location>
</feature>
<sequence>MXXXXGYLEFDGARQQSFLYPFFFREYIYVLAYDHRLNRLNRNRSIFLENADFDKNYSSLIVKRLILRMYEQNRLIIPTKDLNQNPFFGHTNLFYYQMISVLFAVIVEIQFSLRLGSSFEGKQLKKSYNLQSIHSIFPFLEDKLTHFNYVLDVLIPYPIHLEILVQTLRYRVKDASSLHFFRFCLYEYCNWNNLDIKKKSILNPIFFLFLYNSHVCEYESIFFFLRKRSSHLRSTSYKVLFERIFFYGKIQHFLKVFVNNFPASLGLLKDPFLHYVXYHGKFILATKDTPLLMNKWKYYFVNLWQCYFSVWFQSQKVNINQLSKDNLDFLGYLSSLRLNPLVVRSQMLENSFLIDNVRIKLDSKIPISSIIGSLAKDKFCNVLGHPISKATWTDSSDSYILNRFVRICRNISHYYSGSEKKKNLYRIKYILRLCCVKTLARKHKSTVRAFLKRLGSGLLEEFLTGEGQVLSLIFPRSYYASKRLYRVRIWYLDILYLNDLVNHE</sequence>
<keyword id="KW-0150">Chloroplast</keyword>
<keyword id="KW-0507">mRNA processing</keyword>
<keyword id="KW-0934">Plastid</keyword>
<keyword id="KW-0694">RNA-binding</keyword>
<keyword id="KW-0819">tRNA processing</keyword>